<proteinExistence type="inferred from homology"/>
<dbReference type="EC" id="3.4.11.-" evidence="1"/>
<dbReference type="EMBL" id="CP000013">
    <property type="protein sequence ID" value="AAU07218.1"/>
    <property type="molecule type" value="Genomic_DNA"/>
</dbReference>
<dbReference type="RefSeq" id="WP_011193692.1">
    <property type="nucleotide sequence ID" value="NC_006156.1"/>
</dbReference>
<dbReference type="SMR" id="Q661Q3"/>
<dbReference type="GeneID" id="45161153"/>
<dbReference type="KEGG" id="bga:BG0365"/>
<dbReference type="eggNOG" id="COG1362">
    <property type="taxonomic scope" value="Bacteria"/>
</dbReference>
<dbReference type="HOGENOM" id="CLU_590123_0_0_12"/>
<dbReference type="OrthoDB" id="89722at2"/>
<dbReference type="Proteomes" id="UP000002276">
    <property type="component" value="Chromosome"/>
</dbReference>
<dbReference type="GO" id="GO:0005737">
    <property type="term" value="C:cytoplasm"/>
    <property type="evidence" value="ECO:0007669"/>
    <property type="project" value="UniProtKB-ARBA"/>
</dbReference>
<dbReference type="GO" id="GO:0004177">
    <property type="term" value="F:aminopeptidase activity"/>
    <property type="evidence" value="ECO:0007669"/>
    <property type="project" value="UniProtKB-UniRule"/>
</dbReference>
<dbReference type="GO" id="GO:0008237">
    <property type="term" value="F:metallopeptidase activity"/>
    <property type="evidence" value="ECO:0007669"/>
    <property type="project" value="UniProtKB-UniRule"/>
</dbReference>
<dbReference type="GO" id="GO:0008270">
    <property type="term" value="F:zinc ion binding"/>
    <property type="evidence" value="ECO:0007669"/>
    <property type="project" value="UniProtKB-UniRule"/>
</dbReference>
<dbReference type="GO" id="GO:0006508">
    <property type="term" value="P:proteolysis"/>
    <property type="evidence" value="ECO:0007669"/>
    <property type="project" value="UniProtKB-UniRule"/>
</dbReference>
<dbReference type="CDD" id="cd05659">
    <property type="entry name" value="M18_API"/>
    <property type="match status" value="1"/>
</dbReference>
<dbReference type="FunFam" id="2.30.250.10:FF:000006">
    <property type="entry name" value="Probable M18 family aminopeptidase 1"/>
    <property type="match status" value="1"/>
</dbReference>
<dbReference type="Gene3D" id="2.30.250.10">
    <property type="entry name" value="Aminopeptidase i, Domain 2"/>
    <property type="match status" value="1"/>
</dbReference>
<dbReference type="Gene3D" id="3.40.630.10">
    <property type="entry name" value="Zn peptidases"/>
    <property type="match status" value="1"/>
</dbReference>
<dbReference type="HAMAP" id="MF_00466">
    <property type="entry name" value="Aminopeptidase_M18_1"/>
    <property type="match status" value="1"/>
</dbReference>
<dbReference type="InterPro" id="IPR022983">
    <property type="entry name" value="M18_aminopeptidase_1"/>
</dbReference>
<dbReference type="InterPro" id="IPR001948">
    <property type="entry name" value="Peptidase_M18"/>
</dbReference>
<dbReference type="InterPro" id="IPR023358">
    <property type="entry name" value="Peptidase_M18_dom2"/>
</dbReference>
<dbReference type="NCBIfam" id="NF002600">
    <property type="entry name" value="PRK02256.1"/>
    <property type="match status" value="1"/>
</dbReference>
<dbReference type="PANTHER" id="PTHR28570">
    <property type="entry name" value="ASPARTYL AMINOPEPTIDASE"/>
    <property type="match status" value="1"/>
</dbReference>
<dbReference type="PANTHER" id="PTHR28570:SF2">
    <property type="entry name" value="M18 FAMILY AMINOPEPTIDASE 1-RELATED"/>
    <property type="match status" value="1"/>
</dbReference>
<dbReference type="Pfam" id="PF02127">
    <property type="entry name" value="Peptidase_M18"/>
    <property type="match status" value="1"/>
</dbReference>
<dbReference type="PRINTS" id="PR00932">
    <property type="entry name" value="AMINO1PTASE"/>
</dbReference>
<dbReference type="SUPFAM" id="SSF101821">
    <property type="entry name" value="Aminopeptidase/glucanase lid domain"/>
    <property type="match status" value="1"/>
</dbReference>
<dbReference type="SUPFAM" id="SSF53187">
    <property type="entry name" value="Zn-dependent exopeptidases"/>
    <property type="match status" value="1"/>
</dbReference>
<protein>
    <recommendedName>
        <fullName evidence="1">Probable M18 family aminopeptidase 1</fullName>
        <ecNumber evidence="1">3.4.11.-</ecNumber>
    </recommendedName>
</protein>
<reference key="1">
    <citation type="journal article" date="2004" name="Nucleic Acids Res.">
        <title>Comparative analysis of the Borrelia garinii genome.</title>
        <authorList>
            <person name="Gloeckner G."/>
            <person name="Lehmann R."/>
            <person name="Romualdi A."/>
            <person name="Pradella S."/>
            <person name="Schulte-Spechtel U."/>
            <person name="Schilhabel M."/>
            <person name="Wilske B."/>
            <person name="Suehnel J."/>
            <person name="Platzer M."/>
        </authorList>
    </citation>
    <scope>NUCLEOTIDE SEQUENCE [LARGE SCALE GENOMIC DNA]</scope>
    <source>
        <strain>ATCC BAA-2496 / DSM 23469 / PBi</strain>
    </source>
</reference>
<name>APEA_BORGP</name>
<evidence type="ECO:0000255" key="1">
    <source>
        <dbReference type="HAMAP-Rule" id="MF_00466"/>
    </source>
</evidence>
<comment type="cofactor">
    <cofactor evidence="1">
        <name>Zn(2+)</name>
        <dbReference type="ChEBI" id="CHEBI:29105"/>
    </cofactor>
</comment>
<comment type="similarity">
    <text evidence="1">Belongs to the peptidase M18 family.</text>
</comment>
<accession>Q661Q3</accession>
<organism>
    <name type="scientific">Borrelia garinii subsp. bavariensis (strain ATCC BAA-2496 / DSM 23469 / PBi)</name>
    <name type="common">Borreliella bavariensis</name>
    <dbReference type="NCBI Taxonomy" id="290434"/>
    <lineage>
        <taxon>Bacteria</taxon>
        <taxon>Pseudomonadati</taxon>
        <taxon>Spirochaetota</taxon>
        <taxon>Spirochaetia</taxon>
        <taxon>Spirochaetales</taxon>
        <taxon>Borreliaceae</taxon>
        <taxon>Borreliella</taxon>
    </lineage>
</organism>
<feature type="chain" id="PRO_1000013696" description="Probable M18 family aminopeptidase 1">
    <location>
        <begin position="1"/>
        <end position="458"/>
    </location>
</feature>
<feature type="binding site" evidence="1">
    <location>
        <position position="95"/>
    </location>
    <ligand>
        <name>Zn(2+)</name>
        <dbReference type="ChEBI" id="CHEBI:29105"/>
    </ligand>
</feature>
<feature type="binding site" evidence="1">
    <location>
        <position position="170"/>
    </location>
    <ligand>
        <name>Zn(2+)</name>
        <dbReference type="ChEBI" id="CHEBI:29105"/>
    </ligand>
</feature>
<feature type="binding site" evidence="1">
    <location>
        <position position="434"/>
    </location>
    <ligand>
        <name>Zn(2+)</name>
        <dbReference type="ChEBI" id="CHEBI:29105"/>
    </ligand>
</feature>
<gene>
    <name evidence="1" type="primary">apeA</name>
    <name type="ordered locus">BG0365</name>
</gene>
<keyword id="KW-0031">Aminopeptidase</keyword>
<keyword id="KW-0378">Hydrolase</keyword>
<keyword id="KW-0479">Metal-binding</keyword>
<keyword id="KW-0482">Metalloprotease</keyword>
<keyword id="KW-0645">Protease</keyword>
<keyword id="KW-0862">Zinc</keyword>
<sequence length="458" mass="51268">MKKQNPWISLSEEEKNQIFNFSESYKKFISKFKTEREVTSYALDKAKKRGFIDAEEKKNLIPGDKIFYTCREKSVAFAIIGKNPIENGMNLIVSHTDSPRLDAKPSPISEENELAFLKTNYYGGIKKYQWLSTPLSIRGVVFLKNGEKVEINIGDNENDPVFVIPDILPHLDKKIQRNKKSDEIIEGENLKILIGSLPIESKEQDKVKLGTLQLIKEKYKIEEEDFVSSEIEIVPAGTAKDVGFDKALIGAYGQDDKICAYASLEAIFDLEEIPSKTAICFLVDKEEIGSTGSTGLDSRYLEYFVSDMIFKIKKSEYNNLQVQKALWNSKSISADVCAAINPIFNSVHDAQNAPKLGYGIPIMKYTGHGGKVMASDADAELVSYIRQLLNKNNIAWQVATLGKVEEGGGGTVAKFLASYGIRTIDMGPAVISMHSPMEITSKFDLYNAYLAYKAFYKE</sequence>